<protein>
    <recommendedName>
        <fullName evidence="1">Riboflavin kinase</fullName>
        <shortName evidence="1">RFK</shortName>
        <ecNumber evidence="1">2.7.1.161</ecNumber>
    </recommendedName>
    <alternativeName>
        <fullName evidence="1">CTP-dependent riboflavin kinase</fullName>
    </alternativeName>
    <alternativeName>
        <fullName evidence="1">CTP:riboflavin 5'-phosphotransferase</fullName>
    </alternativeName>
    <alternativeName>
        <fullName evidence="1">Flavokinase</fullName>
    </alternativeName>
</protein>
<feature type="chain" id="PRO_0000322079" description="Riboflavin kinase">
    <location>
        <begin position="1"/>
        <end position="175"/>
    </location>
</feature>
<feature type="binding site" evidence="1">
    <location>
        <begin position="54"/>
        <end position="59"/>
    </location>
    <ligand>
        <name>CDP</name>
        <dbReference type="ChEBI" id="CHEBI:58069"/>
    </ligand>
</feature>
<feature type="binding site" evidence="1">
    <location>
        <position position="83"/>
    </location>
    <ligand>
        <name>Mg(2+)</name>
        <dbReference type="ChEBI" id="CHEBI:18420"/>
    </ligand>
</feature>
<feature type="binding site" evidence="1">
    <location>
        <position position="85"/>
    </location>
    <ligand>
        <name>Mg(2+)</name>
        <dbReference type="ChEBI" id="CHEBI:18420"/>
    </ligand>
</feature>
<feature type="binding site" evidence="1">
    <location>
        <position position="142"/>
    </location>
    <ligand>
        <name>FMN</name>
        <dbReference type="ChEBI" id="CHEBI:58210"/>
    </ligand>
</feature>
<feature type="binding site" evidence="1">
    <location>
        <position position="150"/>
    </location>
    <ligand>
        <name>FMN</name>
        <dbReference type="ChEBI" id="CHEBI:58210"/>
    </ligand>
</feature>
<feature type="binding site" evidence="1">
    <location>
        <begin position="155"/>
        <end position="158"/>
    </location>
    <ligand>
        <name>CDP</name>
        <dbReference type="ChEBI" id="CHEBI:58069"/>
    </ligand>
</feature>
<sequence length="175" mass="19586">MEDDKLIVRIISKEGEIIRLTEEGERFLSSCLSSLKDAILSLHSIEIKGNIVSGLGEGKIFLSMEYYKSQINKIMGFDPFPGTLNIVIYDKASLENRLLLDSSPSLMVPEYKQKDRVLGAVKLYPAAINKLTPAAVVIPLRTTHPKSVIEIISPFHLREKLNLKDGDEVTIEVYV</sequence>
<accession>Q97ZG3</accession>
<reference key="1">
    <citation type="journal article" date="2001" name="Proc. Natl. Acad. Sci. U.S.A.">
        <title>The complete genome of the crenarchaeon Sulfolobus solfataricus P2.</title>
        <authorList>
            <person name="She Q."/>
            <person name="Singh R.K."/>
            <person name="Confalonieri F."/>
            <person name="Zivanovic Y."/>
            <person name="Allard G."/>
            <person name="Awayez M.J."/>
            <person name="Chan-Weiher C.C.-Y."/>
            <person name="Clausen I.G."/>
            <person name="Curtis B.A."/>
            <person name="De Moors A."/>
            <person name="Erauso G."/>
            <person name="Fletcher C."/>
            <person name="Gordon P.M.K."/>
            <person name="Heikamp-de Jong I."/>
            <person name="Jeffries A.C."/>
            <person name="Kozera C.J."/>
            <person name="Medina N."/>
            <person name="Peng X."/>
            <person name="Thi-Ngoc H.P."/>
            <person name="Redder P."/>
            <person name="Schenk M.E."/>
            <person name="Theriault C."/>
            <person name="Tolstrup N."/>
            <person name="Charlebois R.L."/>
            <person name="Doolittle W.F."/>
            <person name="Duguet M."/>
            <person name="Gaasterland T."/>
            <person name="Garrett R.A."/>
            <person name="Ragan M.A."/>
            <person name="Sensen C.W."/>
            <person name="Van der Oost J."/>
        </authorList>
    </citation>
    <scope>NUCLEOTIDE SEQUENCE [LARGE SCALE GENOMIC DNA]</scope>
    <source>
        <strain>ATCC 35092 / DSM 1617 / JCM 11322 / P2</strain>
    </source>
</reference>
<proteinExistence type="inferred from homology"/>
<name>RIFK_SACS2</name>
<keyword id="KW-0285">Flavoprotein</keyword>
<keyword id="KW-0288">FMN</keyword>
<keyword id="KW-0418">Kinase</keyword>
<keyword id="KW-0460">Magnesium</keyword>
<keyword id="KW-0479">Metal-binding</keyword>
<keyword id="KW-0547">Nucleotide-binding</keyword>
<keyword id="KW-1185">Reference proteome</keyword>
<keyword id="KW-0808">Transferase</keyword>
<gene>
    <name evidence="1" type="primary">ribK</name>
    <name type="ordered locus">SSO0955</name>
</gene>
<comment type="function">
    <text evidence="1">Catalyzes the CTP-dependent phosphorylation of riboflavin (vitamin B2) to form flavin mononucleotide (FMN).</text>
</comment>
<comment type="catalytic activity">
    <reaction evidence="1">
        <text>riboflavin + CTP = CDP + FMN + H(+)</text>
        <dbReference type="Rhea" id="RHEA:25021"/>
        <dbReference type="ChEBI" id="CHEBI:15378"/>
        <dbReference type="ChEBI" id="CHEBI:37563"/>
        <dbReference type="ChEBI" id="CHEBI:57986"/>
        <dbReference type="ChEBI" id="CHEBI:58069"/>
        <dbReference type="ChEBI" id="CHEBI:58210"/>
        <dbReference type="EC" id="2.7.1.161"/>
    </reaction>
</comment>
<comment type="cofactor">
    <cofactor evidence="1">
        <name>Mg(2+)</name>
        <dbReference type="ChEBI" id="CHEBI:18420"/>
    </cofactor>
    <text evidence="1">Binds 1 Mg(2+) ion per subunit.</text>
</comment>
<comment type="pathway">
    <text evidence="1">Cofactor biosynthesis; FMN biosynthesis; FMN from riboflavin (CTP route): step 1/1.</text>
</comment>
<comment type="similarity">
    <text evidence="1">Belongs to the archaeal riboflavin kinase family.</text>
</comment>
<evidence type="ECO:0000255" key="1">
    <source>
        <dbReference type="HAMAP-Rule" id="MF_01285"/>
    </source>
</evidence>
<dbReference type="EC" id="2.7.1.161" evidence="1"/>
<dbReference type="EMBL" id="AE006641">
    <property type="protein sequence ID" value="AAK41229.1"/>
    <property type="molecule type" value="Genomic_DNA"/>
</dbReference>
<dbReference type="PIR" id="F90246">
    <property type="entry name" value="F90246"/>
</dbReference>
<dbReference type="SMR" id="Q97ZG3"/>
<dbReference type="FunCoup" id="Q97ZG3">
    <property type="interactions" value="9"/>
</dbReference>
<dbReference type="STRING" id="273057.SSO0955"/>
<dbReference type="PaxDb" id="273057-SSO0955"/>
<dbReference type="EnsemblBacteria" id="AAK41229">
    <property type="protein sequence ID" value="AAK41229"/>
    <property type="gene ID" value="SSO0955"/>
</dbReference>
<dbReference type="KEGG" id="sso:SSO0955"/>
<dbReference type="PATRIC" id="fig|273057.12.peg.951"/>
<dbReference type="eggNOG" id="arCOG01904">
    <property type="taxonomic scope" value="Archaea"/>
</dbReference>
<dbReference type="HOGENOM" id="CLU_088476_0_0_2"/>
<dbReference type="InParanoid" id="Q97ZG3"/>
<dbReference type="PhylomeDB" id="Q97ZG3"/>
<dbReference type="UniPathway" id="UPA00276">
    <property type="reaction ID" value="UER00929"/>
</dbReference>
<dbReference type="Proteomes" id="UP000001974">
    <property type="component" value="Chromosome"/>
</dbReference>
<dbReference type="GO" id="GO:0000287">
    <property type="term" value="F:magnesium ion binding"/>
    <property type="evidence" value="ECO:0007669"/>
    <property type="project" value="UniProtKB-UniRule"/>
</dbReference>
<dbReference type="GO" id="GO:0000166">
    <property type="term" value="F:nucleotide binding"/>
    <property type="evidence" value="ECO:0007669"/>
    <property type="project" value="UniProtKB-UniRule"/>
</dbReference>
<dbReference type="GO" id="GO:0008531">
    <property type="term" value="F:riboflavin kinase activity"/>
    <property type="evidence" value="ECO:0007669"/>
    <property type="project" value="InterPro"/>
</dbReference>
<dbReference type="GO" id="GO:0009398">
    <property type="term" value="P:FMN biosynthetic process"/>
    <property type="evidence" value="ECO:0007669"/>
    <property type="project" value="UniProtKB-UniRule"/>
</dbReference>
<dbReference type="GO" id="GO:0009231">
    <property type="term" value="P:riboflavin biosynthetic process"/>
    <property type="evidence" value="ECO:0007669"/>
    <property type="project" value="InterPro"/>
</dbReference>
<dbReference type="Gene3D" id="2.40.30.30">
    <property type="entry name" value="Riboflavin kinase-like"/>
    <property type="match status" value="1"/>
</dbReference>
<dbReference type="HAMAP" id="MF_01285">
    <property type="entry name" value="Riboflavin_kinase"/>
    <property type="match status" value="1"/>
</dbReference>
<dbReference type="InterPro" id="IPR039063">
    <property type="entry name" value="RibK_CTP-dep"/>
</dbReference>
<dbReference type="InterPro" id="IPR023470">
    <property type="entry name" value="Riboflavin_kinase_archaeal"/>
</dbReference>
<dbReference type="InterPro" id="IPR023602">
    <property type="entry name" value="Riboflavin_kinase_CTP-dep"/>
</dbReference>
<dbReference type="InterPro" id="IPR023465">
    <property type="entry name" value="Riboflavin_kinase_dom_sf"/>
</dbReference>
<dbReference type="PANTHER" id="PTHR40706">
    <property type="entry name" value="RIBOFLAVIN KINASE"/>
    <property type="match status" value="1"/>
</dbReference>
<dbReference type="PANTHER" id="PTHR40706:SF1">
    <property type="entry name" value="RIBOFLAVIN KINASE"/>
    <property type="match status" value="1"/>
</dbReference>
<dbReference type="Pfam" id="PF01982">
    <property type="entry name" value="CTP-dep_RFKase"/>
    <property type="match status" value="1"/>
</dbReference>
<dbReference type="SUPFAM" id="SSF82114">
    <property type="entry name" value="Riboflavin kinase-like"/>
    <property type="match status" value="1"/>
</dbReference>
<organism>
    <name type="scientific">Saccharolobus solfataricus (strain ATCC 35092 / DSM 1617 / JCM 11322 / P2)</name>
    <name type="common">Sulfolobus solfataricus</name>
    <dbReference type="NCBI Taxonomy" id="273057"/>
    <lineage>
        <taxon>Archaea</taxon>
        <taxon>Thermoproteota</taxon>
        <taxon>Thermoprotei</taxon>
        <taxon>Sulfolobales</taxon>
        <taxon>Sulfolobaceae</taxon>
        <taxon>Saccharolobus</taxon>
    </lineage>
</organism>